<comment type="function">
    <text evidence="1">ATP-dependent RNA helicase which is a subunit of the eIF4F complex involved in cap recognition and is required for mRNA binding to ribosome. In the current model of translation initiation, eIF4A unwinds RNA secondary structures in the 5'-UTR of mRNAs which is necessary to allow efficient binding of the small ribosomal subunit, and subsequent scanning for the initiator codon (By similarity).</text>
</comment>
<comment type="catalytic activity">
    <reaction>
        <text>ATP + H2O = ADP + phosphate + H(+)</text>
        <dbReference type="Rhea" id="RHEA:13065"/>
        <dbReference type="ChEBI" id="CHEBI:15377"/>
        <dbReference type="ChEBI" id="CHEBI:15378"/>
        <dbReference type="ChEBI" id="CHEBI:30616"/>
        <dbReference type="ChEBI" id="CHEBI:43474"/>
        <dbReference type="ChEBI" id="CHEBI:456216"/>
        <dbReference type="EC" id="3.6.4.13"/>
    </reaction>
</comment>
<comment type="subunit">
    <text evidence="1">eIF4F is a multi-subunit complex, the composition of which varies with external and internal environmental conditions. It is composed of at least EIF4A, EIF4E and EIF4G (By similarity).</text>
</comment>
<comment type="tissue specificity">
    <text>Pollen specific.</text>
</comment>
<comment type="similarity">
    <text evidence="4">Belongs to the DEAD box helicase family. eIF4A subfamily.</text>
</comment>
<proteinExistence type="evidence at transcript level"/>
<accession>P41381</accession>
<protein>
    <recommendedName>
        <fullName>Eukaryotic initiation factor 4A-8</fullName>
        <shortName>eIF-4A-8</shortName>
        <ecNumber>3.6.4.13</ecNumber>
    </recommendedName>
    <alternativeName>
        <fullName>ATP-dependent RNA helicase eIF4A-8</fullName>
    </alternativeName>
</protein>
<name>IF4A8_TOBAC</name>
<organism>
    <name type="scientific">Nicotiana tabacum</name>
    <name type="common">Common tobacco</name>
    <dbReference type="NCBI Taxonomy" id="4097"/>
    <lineage>
        <taxon>Eukaryota</taxon>
        <taxon>Viridiplantae</taxon>
        <taxon>Streptophyta</taxon>
        <taxon>Embryophyta</taxon>
        <taxon>Tracheophyta</taxon>
        <taxon>Spermatophyta</taxon>
        <taxon>Magnoliopsida</taxon>
        <taxon>eudicotyledons</taxon>
        <taxon>Gunneridae</taxon>
        <taxon>Pentapetalae</taxon>
        <taxon>asterids</taxon>
        <taxon>lamiids</taxon>
        <taxon>Solanales</taxon>
        <taxon>Solanaceae</taxon>
        <taxon>Nicotianoideae</taxon>
        <taxon>Nicotianeae</taxon>
        <taxon>Nicotiana</taxon>
    </lineage>
</organism>
<evidence type="ECO:0000250" key="1"/>
<evidence type="ECO:0000255" key="2">
    <source>
        <dbReference type="PROSITE-ProRule" id="PRU00541"/>
    </source>
</evidence>
<evidence type="ECO:0000255" key="3">
    <source>
        <dbReference type="PROSITE-ProRule" id="PRU00542"/>
    </source>
</evidence>
<evidence type="ECO:0000305" key="4"/>
<feature type="chain" id="PRO_0000054955" description="Eukaryotic initiation factor 4A-8">
    <location>
        <begin position="1"/>
        <end position="413"/>
    </location>
</feature>
<feature type="domain" description="Helicase ATP-binding" evidence="2">
    <location>
        <begin position="71"/>
        <end position="241"/>
    </location>
</feature>
<feature type="domain" description="Helicase C-terminal" evidence="3">
    <location>
        <begin position="252"/>
        <end position="413"/>
    </location>
</feature>
<feature type="short sequence motif" description="Q motif">
    <location>
        <begin position="40"/>
        <end position="68"/>
    </location>
</feature>
<feature type="short sequence motif" description="DEAD box">
    <location>
        <begin position="189"/>
        <end position="192"/>
    </location>
</feature>
<feature type="binding site" evidence="2">
    <location>
        <begin position="84"/>
        <end position="91"/>
    </location>
    <ligand>
        <name>ATP</name>
        <dbReference type="ChEBI" id="CHEBI:30616"/>
    </ligand>
</feature>
<keyword id="KW-0067">ATP-binding</keyword>
<keyword id="KW-0347">Helicase</keyword>
<keyword id="KW-0378">Hydrolase</keyword>
<keyword id="KW-0396">Initiation factor</keyword>
<keyword id="KW-0547">Nucleotide-binding</keyword>
<keyword id="KW-0648">Protein biosynthesis</keyword>
<keyword id="KW-1185">Reference proteome</keyword>
<keyword id="KW-0694">RNA-binding</keyword>
<reference key="1">
    <citation type="journal article" date="1995" name="Plant Mol. Biol.">
        <title>A pollen-specific DEAD-box protein related to translation initiation factor eIF-4A from tobacco.</title>
        <authorList>
            <person name="Brander K.A."/>
            <person name="Kuhlemeier C."/>
        </authorList>
    </citation>
    <scope>NUCLEOTIDE SEQUENCE [GENOMIC DNA / MRNA]</scope>
    <source>
        <strain>cv. Samsun</strain>
        <tissue>Pollen</tissue>
    </source>
</reference>
<reference key="2">
    <citation type="journal article" date="1995" name="Biochim. Biophys. Acta">
        <title>Highly conserved genes coding for eukaryotic translation initiation factor eIF-4A of tobacco have specific alterations in functional motifs.</title>
        <authorList>
            <person name="Brander K.A."/>
            <person name="Mandel T."/>
            <person name="Owttrim G.W."/>
            <person name="Kuhlemeier C."/>
        </authorList>
    </citation>
    <scope>NUCLEOTIDE SEQUENCE</scope>
    <source>
        <strain>cv. Samsun</strain>
        <tissue>Leaf</tissue>
    </source>
</reference>
<dbReference type="EC" id="3.6.4.13"/>
<dbReference type="EMBL" id="X79004">
    <property type="protein sequence ID" value="CAA55639.1"/>
    <property type="molecule type" value="mRNA"/>
</dbReference>
<dbReference type="EMBL" id="X79005">
    <property type="protein sequence ID" value="CAA55640.1"/>
    <property type="molecule type" value="Genomic_DNA"/>
</dbReference>
<dbReference type="PIR" id="S60244">
    <property type="entry name" value="S60244"/>
</dbReference>
<dbReference type="RefSeq" id="NP_001313012.1">
    <property type="nucleotide sequence ID" value="NM_001326083.1"/>
</dbReference>
<dbReference type="SMR" id="P41381"/>
<dbReference type="STRING" id="4097.P41381"/>
<dbReference type="PaxDb" id="4097-P41381"/>
<dbReference type="GeneID" id="107821770"/>
<dbReference type="KEGG" id="nta:107821770"/>
<dbReference type="OrthoDB" id="10265785at2759"/>
<dbReference type="Proteomes" id="UP000084051">
    <property type="component" value="Unplaced"/>
</dbReference>
<dbReference type="GO" id="GO:0010494">
    <property type="term" value="C:cytoplasmic stress granule"/>
    <property type="evidence" value="ECO:0000318"/>
    <property type="project" value="GO_Central"/>
</dbReference>
<dbReference type="GO" id="GO:0005524">
    <property type="term" value="F:ATP binding"/>
    <property type="evidence" value="ECO:0007669"/>
    <property type="project" value="UniProtKB-KW"/>
</dbReference>
<dbReference type="GO" id="GO:0016887">
    <property type="term" value="F:ATP hydrolysis activity"/>
    <property type="evidence" value="ECO:0007669"/>
    <property type="project" value="RHEA"/>
</dbReference>
<dbReference type="GO" id="GO:0003723">
    <property type="term" value="F:RNA binding"/>
    <property type="evidence" value="ECO:0007669"/>
    <property type="project" value="UniProtKB-KW"/>
</dbReference>
<dbReference type="GO" id="GO:0003724">
    <property type="term" value="F:RNA helicase activity"/>
    <property type="evidence" value="ECO:0007669"/>
    <property type="project" value="UniProtKB-EC"/>
</dbReference>
<dbReference type="GO" id="GO:0003743">
    <property type="term" value="F:translation initiation factor activity"/>
    <property type="evidence" value="ECO:0000318"/>
    <property type="project" value="GO_Central"/>
</dbReference>
<dbReference type="GO" id="GO:0002183">
    <property type="term" value="P:cytoplasmic translational initiation"/>
    <property type="evidence" value="ECO:0000318"/>
    <property type="project" value="GO_Central"/>
</dbReference>
<dbReference type="CDD" id="cd17939">
    <property type="entry name" value="DEADc_EIF4A"/>
    <property type="match status" value="1"/>
</dbReference>
<dbReference type="CDD" id="cd18787">
    <property type="entry name" value="SF2_C_DEAD"/>
    <property type="match status" value="1"/>
</dbReference>
<dbReference type="FunFam" id="3.40.50.300:FF:000089">
    <property type="entry name" value="Eukaryotic initiation factor 4A-II"/>
    <property type="match status" value="1"/>
</dbReference>
<dbReference type="FunFam" id="3.40.50.300:FF:000031">
    <property type="entry name" value="Eukaryotic initiation factor 4A-III"/>
    <property type="match status" value="1"/>
</dbReference>
<dbReference type="Gene3D" id="3.40.50.300">
    <property type="entry name" value="P-loop containing nucleotide triphosphate hydrolases"/>
    <property type="match status" value="2"/>
</dbReference>
<dbReference type="InterPro" id="IPR011545">
    <property type="entry name" value="DEAD/DEAH_box_helicase_dom"/>
</dbReference>
<dbReference type="InterPro" id="IPR014001">
    <property type="entry name" value="Helicase_ATP-bd"/>
</dbReference>
<dbReference type="InterPro" id="IPR001650">
    <property type="entry name" value="Helicase_C-like"/>
</dbReference>
<dbReference type="InterPro" id="IPR027417">
    <property type="entry name" value="P-loop_NTPase"/>
</dbReference>
<dbReference type="InterPro" id="IPR000629">
    <property type="entry name" value="RNA-helicase_DEAD-box_CS"/>
</dbReference>
<dbReference type="InterPro" id="IPR014014">
    <property type="entry name" value="RNA_helicase_DEAD_Q_motif"/>
</dbReference>
<dbReference type="PANTHER" id="PTHR47958">
    <property type="entry name" value="ATP-DEPENDENT RNA HELICASE DBP3"/>
    <property type="match status" value="1"/>
</dbReference>
<dbReference type="Pfam" id="PF00270">
    <property type="entry name" value="DEAD"/>
    <property type="match status" value="1"/>
</dbReference>
<dbReference type="Pfam" id="PF00271">
    <property type="entry name" value="Helicase_C"/>
    <property type="match status" value="1"/>
</dbReference>
<dbReference type="SMART" id="SM00487">
    <property type="entry name" value="DEXDc"/>
    <property type="match status" value="1"/>
</dbReference>
<dbReference type="SMART" id="SM00490">
    <property type="entry name" value="HELICc"/>
    <property type="match status" value="1"/>
</dbReference>
<dbReference type="SUPFAM" id="SSF52540">
    <property type="entry name" value="P-loop containing nucleoside triphosphate hydrolases"/>
    <property type="match status" value="1"/>
</dbReference>
<dbReference type="PROSITE" id="PS00039">
    <property type="entry name" value="DEAD_ATP_HELICASE"/>
    <property type="match status" value="1"/>
</dbReference>
<dbReference type="PROSITE" id="PS51192">
    <property type="entry name" value="HELICASE_ATP_BIND_1"/>
    <property type="match status" value="1"/>
</dbReference>
<dbReference type="PROSITE" id="PS51194">
    <property type="entry name" value="HELICASE_CTER"/>
    <property type="match status" value="1"/>
</dbReference>
<dbReference type="PROSITE" id="PS51195">
    <property type="entry name" value="Q_MOTIF"/>
    <property type="match status" value="1"/>
</dbReference>
<sequence length="413" mass="46888">MARLAPDGAQFDARQYDSKMNDLLAADGKDFFTSYDEVYDSFDAMGLQENLLRGIYAYGFEKPSAIQQRGIVPFCKGLDVIQQAQSGTGKTATFCSGILQQLDYGLVQCQALVLAPTRELAQQIEKVMRALGDYLGVKVHACVGGTSVREDQRILAAGVHVIVGTPGRVFDMLRRQSLRPDYLRMFVLDEADEMLSRGFKDQIYDIFQMLPTKVQVGVFSATMPPEALDITRKFMNKPVRILVKRDELTLEGIKQFYVNVDKEEWKLETLCDLYETLAITQSVIFVNTRRKVDWLTDKMRTRDHTVSATHGDMDQNTRDIIMREFRSGSSRVLITTDLLARGIDVQQVSLVINYDLPTQPENYLHRIGRSGRFGRKGVAINFVTTDDERMLFDIQKFYNVIIEELPSNVADLL</sequence>